<keyword id="KW-0131">Cell cycle</keyword>
<keyword id="KW-0132">Cell division</keyword>
<keyword id="KW-0175">Coiled coil</keyword>
<keyword id="KW-0963">Cytoplasm</keyword>
<keyword id="KW-0717">Septation</keyword>
<organism>
    <name type="scientific">Actinobacillus pleuropneumoniae serotype 7 (strain AP76)</name>
    <dbReference type="NCBI Taxonomy" id="537457"/>
    <lineage>
        <taxon>Bacteria</taxon>
        <taxon>Pseudomonadati</taxon>
        <taxon>Pseudomonadota</taxon>
        <taxon>Gammaproteobacteria</taxon>
        <taxon>Pasteurellales</taxon>
        <taxon>Pasteurellaceae</taxon>
        <taxon>Actinobacillus</taxon>
    </lineage>
</organism>
<comment type="function">
    <text evidence="1">Non-essential, abundant cell division factor that is required for proper Z-ring formation. It is recruited early to the divisome by direct interaction with FtsZ, stimulating Z-ring assembly and thereby promoting cell division earlier in the cell cycle. Its recruitment to the Z-ring requires functional FtsA or ZipA.</text>
</comment>
<comment type="subunit">
    <text evidence="1">Homodimer. The ends of the coiled-coil dimer bind to each other, forming polymers. Interacts with FtsZ.</text>
</comment>
<comment type="subcellular location">
    <subcellularLocation>
        <location evidence="1">Cytoplasm</location>
    </subcellularLocation>
    <text evidence="1">Localizes to the septum at mid-cell, in a FtsZ-like pattern.</text>
</comment>
<comment type="similarity">
    <text evidence="1">Belongs to the ZapB family.</text>
</comment>
<sequence>MSLPILDQLEEKIKQAVETIQLLQLEVEELKEKNTTVEQEKETLRQEYEQLKSEQQSFQDRLRSLLGQIDNV</sequence>
<gene>
    <name evidence="1" type="primary">zapB</name>
    <name type="ordered locus">APP7_0669</name>
</gene>
<reference key="1">
    <citation type="submission" date="2008-06" db="EMBL/GenBank/DDBJ databases">
        <title>Genome and proteome analysis of A. pleuropneumoniae serotype 7.</title>
        <authorList>
            <person name="Linke B."/>
            <person name="Buettner F."/>
            <person name="Martinez-Arias R."/>
            <person name="Goesmann A."/>
            <person name="Baltes N."/>
            <person name="Tegetmeyer H."/>
            <person name="Singh M."/>
            <person name="Gerlach G.F."/>
        </authorList>
    </citation>
    <scope>NUCLEOTIDE SEQUENCE [LARGE SCALE GENOMIC DNA]</scope>
    <source>
        <strain>AP76</strain>
    </source>
</reference>
<proteinExistence type="inferred from homology"/>
<accession>B3H152</accession>
<evidence type="ECO:0000255" key="1">
    <source>
        <dbReference type="HAMAP-Rule" id="MF_01196"/>
    </source>
</evidence>
<protein>
    <recommendedName>
        <fullName evidence="1">Cell division protein ZapB</fullName>
    </recommendedName>
</protein>
<name>ZAPB_ACTP7</name>
<dbReference type="EMBL" id="CP001091">
    <property type="protein sequence ID" value="ACE61321.1"/>
    <property type="molecule type" value="Genomic_DNA"/>
</dbReference>
<dbReference type="RefSeq" id="WP_005596893.1">
    <property type="nucleotide sequence ID" value="NC_010939.1"/>
</dbReference>
<dbReference type="SMR" id="B3H152"/>
<dbReference type="GeneID" id="48598811"/>
<dbReference type="KEGG" id="apa:APP7_0669"/>
<dbReference type="HOGENOM" id="CLU_171174_0_0_6"/>
<dbReference type="Proteomes" id="UP000001226">
    <property type="component" value="Chromosome"/>
</dbReference>
<dbReference type="GO" id="GO:0005737">
    <property type="term" value="C:cytoplasm"/>
    <property type="evidence" value="ECO:0007669"/>
    <property type="project" value="UniProtKB-SubCell"/>
</dbReference>
<dbReference type="GO" id="GO:0000917">
    <property type="term" value="P:division septum assembly"/>
    <property type="evidence" value="ECO:0007669"/>
    <property type="project" value="UniProtKB-KW"/>
</dbReference>
<dbReference type="GO" id="GO:0043093">
    <property type="term" value="P:FtsZ-dependent cytokinesis"/>
    <property type="evidence" value="ECO:0007669"/>
    <property type="project" value="UniProtKB-UniRule"/>
</dbReference>
<dbReference type="Gene3D" id="1.20.5.340">
    <property type="match status" value="1"/>
</dbReference>
<dbReference type="HAMAP" id="MF_01196">
    <property type="entry name" value="ZapB"/>
    <property type="match status" value="1"/>
</dbReference>
<dbReference type="InterPro" id="IPR009252">
    <property type="entry name" value="Cell_div_ZapB"/>
</dbReference>
<dbReference type="Pfam" id="PF06005">
    <property type="entry name" value="ZapB"/>
    <property type="match status" value="1"/>
</dbReference>
<feature type="chain" id="PRO_1000138427" description="Cell division protein ZapB">
    <location>
        <begin position="1"/>
        <end position="72"/>
    </location>
</feature>
<feature type="coiled-coil region" evidence="1">
    <location>
        <begin position="5"/>
        <end position="71"/>
    </location>
</feature>